<dbReference type="EC" id="2.7.7.61" evidence="1"/>
<dbReference type="EMBL" id="CP000266">
    <property type="protein sequence ID" value="ABF02824.1"/>
    <property type="molecule type" value="Genomic_DNA"/>
</dbReference>
<dbReference type="RefSeq" id="WP_000550399.1">
    <property type="nucleotide sequence ID" value="NC_008258.1"/>
</dbReference>
<dbReference type="SMR" id="Q0T702"/>
<dbReference type="KEGG" id="sfv:SFV_0567"/>
<dbReference type="HOGENOM" id="CLU_104529_1_1_6"/>
<dbReference type="Proteomes" id="UP000000659">
    <property type="component" value="Chromosome"/>
</dbReference>
<dbReference type="GO" id="GO:0050519">
    <property type="term" value="F:holo-citrate lyase synthase activity"/>
    <property type="evidence" value="ECO:0007669"/>
    <property type="project" value="UniProtKB-UniRule"/>
</dbReference>
<dbReference type="GO" id="GO:0051191">
    <property type="term" value="P:prosthetic group biosynthetic process"/>
    <property type="evidence" value="ECO:0007669"/>
    <property type="project" value="InterPro"/>
</dbReference>
<dbReference type="HAMAP" id="MF_00398">
    <property type="entry name" value="CitX"/>
    <property type="match status" value="1"/>
</dbReference>
<dbReference type="InterPro" id="IPR005551">
    <property type="entry name" value="CitX"/>
</dbReference>
<dbReference type="NCBIfam" id="TIGR03124">
    <property type="entry name" value="citrate_citX"/>
    <property type="match status" value="1"/>
</dbReference>
<dbReference type="NCBIfam" id="NF002383">
    <property type="entry name" value="PRK01392.1"/>
    <property type="match status" value="1"/>
</dbReference>
<dbReference type="Pfam" id="PF03802">
    <property type="entry name" value="CitX"/>
    <property type="match status" value="1"/>
</dbReference>
<sequence length="183" mass="20352">MHLLPELASHHAVSIPELLVSRDERQARQHAWLKHHPVPLVSFTVVAPGPIKDSEVTRRIFNHRVTALRALATKQGWQIQEQAALVSASGPEGMLSIAAPARDLKLATIELEHSHPLGRLWDIDVLTPEGEILSRRDYSLPPRRCLLCEQSAAVCARGKTHQLTDLLNRMEALLNDVDACNVN</sequence>
<feature type="chain" id="PRO_1000049604" description="Apo-citrate lyase phosphoribosyl-dephospho-CoA transferase">
    <location>
        <begin position="1"/>
        <end position="183"/>
    </location>
</feature>
<proteinExistence type="inferred from homology"/>
<accession>Q0T702</accession>
<keyword id="KW-0548">Nucleotidyltransferase</keyword>
<keyword id="KW-0808">Transferase</keyword>
<evidence type="ECO:0000255" key="1">
    <source>
        <dbReference type="HAMAP-Rule" id="MF_00398"/>
    </source>
</evidence>
<protein>
    <recommendedName>
        <fullName>Apo-citrate lyase phosphoribosyl-dephospho-CoA transferase</fullName>
        <ecNumber evidence="1">2.7.7.61</ecNumber>
    </recommendedName>
    <alternativeName>
        <fullName evidence="1">Apo-ACP nucleodityltransferase</fullName>
    </alternativeName>
    <alternativeName>
        <fullName evidence="1">Holo-ACP synthase</fullName>
    </alternativeName>
    <alternativeName>
        <fullName evidence="1">Holo-citrate lyase synthase</fullName>
    </alternativeName>
</protein>
<reference key="1">
    <citation type="journal article" date="2006" name="BMC Genomics">
        <title>Complete genome sequence of Shigella flexneri 5b and comparison with Shigella flexneri 2a.</title>
        <authorList>
            <person name="Nie H."/>
            <person name="Yang F."/>
            <person name="Zhang X."/>
            <person name="Yang J."/>
            <person name="Chen L."/>
            <person name="Wang J."/>
            <person name="Xiong Z."/>
            <person name="Peng J."/>
            <person name="Sun L."/>
            <person name="Dong J."/>
            <person name="Xue Y."/>
            <person name="Xu X."/>
            <person name="Chen S."/>
            <person name="Yao Z."/>
            <person name="Shen Y."/>
            <person name="Jin Q."/>
        </authorList>
    </citation>
    <scope>NUCLEOTIDE SEQUENCE [LARGE SCALE GENOMIC DNA]</scope>
    <source>
        <strain>8401</strain>
    </source>
</reference>
<name>CITX_SHIF8</name>
<gene>
    <name evidence="1" type="primary">citX</name>
    <name type="ordered locus">SFV_0567</name>
</gene>
<organism>
    <name type="scientific">Shigella flexneri serotype 5b (strain 8401)</name>
    <dbReference type="NCBI Taxonomy" id="373384"/>
    <lineage>
        <taxon>Bacteria</taxon>
        <taxon>Pseudomonadati</taxon>
        <taxon>Pseudomonadota</taxon>
        <taxon>Gammaproteobacteria</taxon>
        <taxon>Enterobacterales</taxon>
        <taxon>Enterobacteriaceae</taxon>
        <taxon>Shigella</taxon>
    </lineage>
</organism>
<comment type="function">
    <text evidence="1">Transfers 2-(5''-triphosphoribosyl)-3'-dephosphocoenzyme-A on a serine residue to the apo-acyl carrier protein (gamma chain) of the citrate lyase to yield holo-acyl carrier protein.</text>
</comment>
<comment type="catalytic activity">
    <reaction evidence="1">
        <text>apo-[citrate lyase ACP] + 2'-(5''-triphospho-alpha-D-ribosyl)-3'-dephospho-CoA = holo-[citrate lyase ACP] + diphosphate</text>
        <dbReference type="Rhea" id="RHEA:16333"/>
        <dbReference type="Rhea" id="RHEA-COMP:10157"/>
        <dbReference type="Rhea" id="RHEA-COMP:10158"/>
        <dbReference type="ChEBI" id="CHEBI:29999"/>
        <dbReference type="ChEBI" id="CHEBI:33019"/>
        <dbReference type="ChEBI" id="CHEBI:61378"/>
        <dbReference type="ChEBI" id="CHEBI:82683"/>
        <dbReference type="EC" id="2.7.7.61"/>
    </reaction>
</comment>
<comment type="similarity">
    <text evidence="1">Belongs to the CitX family.</text>
</comment>